<proteinExistence type="inferred from homology"/>
<sequence>MTVKICDCEGECCKDSCHCGSTCLPSCSGGEKCKCDHSTGSPQCKSCGEKCKCETTCTCEKSKCNCEKC</sequence>
<dbReference type="EMBL" id="AAFW02000030">
    <property type="protein sequence ID" value="EDN63899.1"/>
    <property type="molecule type" value="Genomic_DNA"/>
</dbReference>
<dbReference type="SMR" id="A6ZNN4"/>
<dbReference type="HOGENOM" id="CLU_2777367_0_0_1"/>
<dbReference type="Proteomes" id="UP000007060">
    <property type="component" value="Unassembled WGS sequence"/>
</dbReference>
<dbReference type="GO" id="GO:0046872">
    <property type="term" value="F:metal ion binding"/>
    <property type="evidence" value="ECO:0007669"/>
    <property type="project" value="UniProtKB-KW"/>
</dbReference>
<dbReference type="InterPro" id="IPR035715">
    <property type="entry name" value="Crs5"/>
</dbReference>
<dbReference type="Pfam" id="PF12809">
    <property type="entry name" value="Metallothi_Euk2"/>
    <property type="match status" value="1"/>
</dbReference>
<feature type="chain" id="PRO_0000392088" description="Metallothionein-like protein CRS5">
    <location>
        <begin position="1"/>
        <end position="69"/>
    </location>
</feature>
<comment type="function">
    <text evidence="1">Critical role in copper (specific) homeostasis and detoxification. May protect by directly chelating and sequestering copper ions (By similarity).</text>
</comment>
<comment type="similarity">
    <text evidence="2">Belongs to the metallothionein superfamily. Type 13 family.</text>
</comment>
<name>CRS5_YEAS7</name>
<reference key="1">
    <citation type="journal article" date="2007" name="Proc. Natl. Acad. Sci. U.S.A.">
        <title>Genome sequencing and comparative analysis of Saccharomyces cerevisiae strain YJM789.</title>
        <authorList>
            <person name="Wei W."/>
            <person name="McCusker J.H."/>
            <person name="Hyman R.W."/>
            <person name="Jones T."/>
            <person name="Ning Y."/>
            <person name="Cao Z."/>
            <person name="Gu Z."/>
            <person name="Bruno D."/>
            <person name="Miranda M."/>
            <person name="Nguyen M."/>
            <person name="Wilhelmy J."/>
            <person name="Komp C."/>
            <person name="Tamse R."/>
            <person name="Wang X."/>
            <person name="Jia P."/>
            <person name="Luedi P."/>
            <person name="Oefner P.J."/>
            <person name="David L."/>
            <person name="Dietrich F.S."/>
            <person name="Li Y."/>
            <person name="Davis R.W."/>
            <person name="Steinmetz L.M."/>
        </authorList>
    </citation>
    <scope>NUCLEOTIDE SEQUENCE [LARGE SCALE GENOMIC DNA]</scope>
    <source>
        <strain>YJM789</strain>
    </source>
</reference>
<accession>A6ZNN4</accession>
<protein>
    <recommendedName>
        <fullName>Metallothionein-like protein CRS5</fullName>
    </recommendedName>
</protein>
<keyword id="KW-0186">Copper</keyword>
<keyword id="KW-0479">Metal-binding</keyword>
<keyword id="KW-0480">Metal-thiolate cluster</keyword>
<gene>
    <name type="primary">CRS5</name>
    <name type="ORF">SCY_5102</name>
</gene>
<evidence type="ECO:0000250" key="1"/>
<evidence type="ECO:0000305" key="2"/>
<organism>
    <name type="scientific">Saccharomyces cerevisiae (strain YJM789)</name>
    <name type="common">Baker's yeast</name>
    <dbReference type="NCBI Taxonomy" id="307796"/>
    <lineage>
        <taxon>Eukaryota</taxon>
        <taxon>Fungi</taxon>
        <taxon>Dikarya</taxon>
        <taxon>Ascomycota</taxon>
        <taxon>Saccharomycotina</taxon>
        <taxon>Saccharomycetes</taxon>
        <taxon>Saccharomycetales</taxon>
        <taxon>Saccharomycetaceae</taxon>
        <taxon>Saccharomyces</taxon>
    </lineage>
</organism>